<protein>
    <recommendedName>
        <fullName evidence="1">ATP phosphoribosyltransferase</fullName>
        <shortName evidence="1">ATP-PRT</shortName>
        <shortName evidence="1">ATP-PRTase</shortName>
        <ecNumber evidence="1">2.4.2.17</ecNumber>
    </recommendedName>
</protein>
<gene>
    <name evidence="1" type="primary">hisG</name>
    <name type="ordered locus">swp_3001</name>
</gene>
<comment type="function">
    <text evidence="1">Catalyzes the condensation of ATP and 5-phosphoribose 1-diphosphate to form N'-(5'-phosphoribosyl)-ATP (PR-ATP). Has a crucial role in the pathway because the rate of histidine biosynthesis seems to be controlled primarily by regulation of HisG enzymatic activity.</text>
</comment>
<comment type="catalytic activity">
    <reaction evidence="1">
        <text>1-(5-phospho-beta-D-ribosyl)-ATP + diphosphate = 5-phospho-alpha-D-ribose 1-diphosphate + ATP</text>
        <dbReference type="Rhea" id="RHEA:18473"/>
        <dbReference type="ChEBI" id="CHEBI:30616"/>
        <dbReference type="ChEBI" id="CHEBI:33019"/>
        <dbReference type="ChEBI" id="CHEBI:58017"/>
        <dbReference type="ChEBI" id="CHEBI:73183"/>
        <dbReference type="EC" id="2.4.2.17"/>
    </reaction>
</comment>
<comment type="cofactor">
    <cofactor evidence="1">
        <name>Mg(2+)</name>
        <dbReference type="ChEBI" id="CHEBI:18420"/>
    </cofactor>
</comment>
<comment type="activity regulation">
    <text evidence="1">Feedback inhibited by histidine.</text>
</comment>
<comment type="pathway">
    <text evidence="1">Amino-acid biosynthesis; L-histidine biosynthesis; L-histidine from 5-phospho-alpha-D-ribose 1-diphosphate: step 1/9.</text>
</comment>
<comment type="subcellular location">
    <subcellularLocation>
        <location evidence="1">Cytoplasm</location>
    </subcellularLocation>
</comment>
<comment type="similarity">
    <text evidence="1">Belongs to the ATP phosphoribosyltransferase family. Long subfamily.</text>
</comment>
<reference key="1">
    <citation type="journal article" date="2008" name="PLoS ONE">
        <title>Environmental adaptation: genomic analysis of the piezotolerant and psychrotolerant deep-sea iron reducing bacterium Shewanella piezotolerans WP3.</title>
        <authorList>
            <person name="Wang F."/>
            <person name="Wang J."/>
            <person name="Jian H."/>
            <person name="Zhang B."/>
            <person name="Li S."/>
            <person name="Wang F."/>
            <person name="Zeng X."/>
            <person name="Gao L."/>
            <person name="Bartlett D.H."/>
            <person name="Yu J."/>
            <person name="Hu S."/>
            <person name="Xiao X."/>
        </authorList>
    </citation>
    <scope>NUCLEOTIDE SEQUENCE [LARGE SCALE GENOMIC DNA]</scope>
    <source>
        <strain>WP3 / JCM 13877</strain>
    </source>
</reference>
<proteinExistence type="inferred from homology"/>
<evidence type="ECO:0000255" key="1">
    <source>
        <dbReference type="HAMAP-Rule" id="MF_00079"/>
    </source>
</evidence>
<organism>
    <name type="scientific">Shewanella piezotolerans (strain WP3 / JCM 13877)</name>
    <dbReference type="NCBI Taxonomy" id="225849"/>
    <lineage>
        <taxon>Bacteria</taxon>
        <taxon>Pseudomonadati</taxon>
        <taxon>Pseudomonadota</taxon>
        <taxon>Gammaproteobacteria</taxon>
        <taxon>Alteromonadales</taxon>
        <taxon>Shewanellaceae</taxon>
        <taxon>Shewanella</taxon>
    </lineage>
</organism>
<sequence length="299" mass="33070">MSESNRLRIAIQKSGRLSKESLKLLKSCGVKFNINEQRLIAHSDNMPIDLLRVRDDDIPGLVMDGVVDLGFIGENVLEEEQIERQSLNKPSECIKLRELDFGACRLSLAVPNEFNYQDASSLEGVRIATSYPNILRRYMQQKGISYNDCMLKGSVEVAPRAGLSDAICDLVSTGATLEANGLYETEVIYQSTACLIQSTTSQPDDKQALINKILSRINGVVRAKESKYILLHAPTETLEQIVALLPGAENPTVLPLNDDTNRVAIHAVSTEDLFWDTMEQLTQLGASSILVMPIEKMMG</sequence>
<accession>B8CR48</accession>
<keyword id="KW-0028">Amino-acid biosynthesis</keyword>
<keyword id="KW-0067">ATP-binding</keyword>
<keyword id="KW-0963">Cytoplasm</keyword>
<keyword id="KW-0328">Glycosyltransferase</keyword>
<keyword id="KW-0368">Histidine biosynthesis</keyword>
<keyword id="KW-0460">Magnesium</keyword>
<keyword id="KW-0479">Metal-binding</keyword>
<keyword id="KW-0547">Nucleotide-binding</keyword>
<keyword id="KW-0808">Transferase</keyword>
<feature type="chain" id="PRO_1000117096" description="ATP phosphoribosyltransferase">
    <location>
        <begin position="1"/>
        <end position="299"/>
    </location>
</feature>
<dbReference type="EC" id="2.4.2.17" evidence="1"/>
<dbReference type="EMBL" id="CP000472">
    <property type="protein sequence ID" value="ACJ29720.1"/>
    <property type="molecule type" value="Genomic_DNA"/>
</dbReference>
<dbReference type="RefSeq" id="WP_020913074.1">
    <property type="nucleotide sequence ID" value="NC_011566.1"/>
</dbReference>
<dbReference type="SMR" id="B8CR48"/>
<dbReference type="STRING" id="225849.swp_3001"/>
<dbReference type="KEGG" id="swp:swp_3001"/>
<dbReference type="eggNOG" id="COG0040">
    <property type="taxonomic scope" value="Bacteria"/>
</dbReference>
<dbReference type="HOGENOM" id="CLU_038115_1_0_6"/>
<dbReference type="OrthoDB" id="9801867at2"/>
<dbReference type="UniPathway" id="UPA00031">
    <property type="reaction ID" value="UER00006"/>
</dbReference>
<dbReference type="Proteomes" id="UP000000753">
    <property type="component" value="Chromosome"/>
</dbReference>
<dbReference type="GO" id="GO:0005737">
    <property type="term" value="C:cytoplasm"/>
    <property type="evidence" value="ECO:0007669"/>
    <property type="project" value="UniProtKB-SubCell"/>
</dbReference>
<dbReference type="GO" id="GO:0005524">
    <property type="term" value="F:ATP binding"/>
    <property type="evidence" value="ECO:0007669"/>
    <property type="project" value="UniProtKB-KW"/>
</dbReference>
<dbReference type="GO" id="GO:0003879">
    <property type="term" value="F:ATP phosphoribosyltransferase activity"/>
    <property type="evidence" value="ECO:0007669"/>
    <property type="project" value="UniProtKB-UniRule"/>
</dbReference>
<dbReference type="GO" id="GO:0000287">
    <property type="term" value="F:magnesium ion binding"/>
    <property type="evidence" value="ECO:0007669"/>
    <property type="project" value="UniProtKB-UniRule"/>
</dbReference>
<dbReference type="GO" id="GO:0000105">
    <property type="term" value="P:L-histidine biosynthetic process"/>
    <property type="evidence" value="ECO:0007669"/>
    <property type="project" value="UniProtKB-UniRule"/>
</dbReference>
<dbReference type="CDD" id="cd13592">
    <property type="entry name" value="PBP2_HisGL2"/>
    <property type="match status" value="1"/>
</dbReference>
<dbReference type="FunFam" id="3.30.70.120:FF:000002">
    <property type="entry name" value="ATP phosphoribosyltransferase"/>
    <property type="match status" value="1"/>
</dbReference>
<dbReference type="FunFam" id="3.40.190.10:FF:000008">
    <property type="entry name" value="ATP phosphoribosyltransferase"/>
    <property type="match status" value="1"/>
</dbReference>
<dbReference type="Gene3D" id="3.30.70.120">
    <property type="match status" value="1"/>
</dbReference>
<dbReference type="Gene3D" id="3.40.190.10">
    <property type="entry name" value="Periplasmic binding protein-like II"/>
    <property type="match status" value="2"/>
</dbReference>
<dbReference type="HAMAP" id="MF_00079">
    <property type="entry name" value="HisG_Long"/>
    <property type="match status" value="1"/>
</dbReference>
<dbReference type="InterPro" id="IPR020621">
    <property type="entry name" value="ATP-PRT_HisG_long"/>
</dbReference>
<dbReference type="InterPro" id="IPR013820">
    <property type="entry name" value="ATP_PRibTrfase_cat"/>
</dbReference>
<dbReference type="InterPro" id="IPR018198">
    <property type="entry name" value="ATP_PRibTrfase_CS"/>
</dbReference>
<dbReference type="InterPro" id="IPR001348">
    <property type="entry name" value="ATP_PRibTrfase_HisG"/>
</dbReference>
<dbReference type="InterPro" id="IPR013115">
    <property type="entry name" value="HisG_C"/>
</dbReference>
<dbReference type="InterPro" id="IPR011322">
    <property type="entry name" value="N-reg_PII-like_a/b"/>
</dbReference>
<dbReference type="InterPro" id="IPR015867">
    <property type="entry name" value="N-reg_PII/ATP_PRibTrfase_C"/>
</dbReference>
<dbReference type="NCBIfam" id="TIGR00070">
    <property type="entry name" value="hisG"/>
    <property type="match status" value="1"/>
</dbReference>
<dbReference type="NCBIfam" id="TIGR03455">
    <property type="entry name" value="HisG_C-term"/>
    <property type="match status" value="1"/>
</dbReference>
<dbReference type="PANTHER" id="PTHR21403:SF8">
    <property type="entry name" value="ATP PHOSPHORIBOSYLTRANSFERASE"/>
    <property type="match status" value="1"/>
</dbReference>
<dbReference type="PANTHER" id="PTHR21403">
    <property type="entry name" value="ATP PHOSPHORIBOSYLTRANSFERASE ATP-PRTASE"/>
    <property type="match status" value="1"/>
</dbReference>
<dbReference type="Pfam" id="PF01634">
    <property type="entry name" value="HisG"/>
    <property type="match status" value="1"/>
</dbReference>
<dbReference type="Pfam" id="PF08029">
    <property type="entry name" value="HisG_C"/>
    <property type="match status" value="1"/>
</dbReference>
<dbReference type="SUPFAM" id="SSF54913">
    <property type="entry name" value="GlnB-like"/>
    <property type="match status" value="1"/>
</dbReference>
<dbReference type="SUPFAM" id="SSF53850">
    <property type="entry name" value="Periplasmic binding protein-like II"/>
    <property type="match status" value="1"/>
</dbReference>
<dbReference type="PROSITE" id="PS01316">
    <property type="entry name" value="ATP_P_PHORIBOSYLTR"/>
    <property type="match status" value="1"/>
</dbReference>
<name>HIS1_SHEPW</name>